<accession>C1DRR5</accession>
<sequence length="92" mass="10410">MTKSELIERIVTQQGQLSAKDVELAIKTMLEQMSQALATGDRIEIRGFGSFSLHYRAPRVGRNPKTGQTVRLDGKFVPHFKPGKELRDRVNE</sequence>
<evidence type="ECO:0000255" key="1">
    <source>
        <dbReference type="HAMAP-Rule" id="MF_00381"/>
    </source>
</evidence>
<reference key="1">
    <citation type="journal article" date="2009" name="J. Bacteriol.">
        <title>Genome sequence of Azotobacter vinelandii, an obligate aerobe specialized to support diverse anaerobic metabolic processes.</title>
        <authorList>
            <person name="Setubal J.C."/>
            <person name="Dos Santos P."/>
            <person name="Goldman B.S."/>
            <person name="Ertesvaag H."/>
            <person name="Espin G."/>
            <person name="Rubio L.M."/>
            <person name="Valla S."/>
            <person name="Almeida N.F."/>
            <person name="Balasubramanian D."/>
            <person name="Cromes L."/>
            <person name="Curatti L."/>
            <person name="Du Z."/>
            <person name="Godsy E."/>
            <person name="Goodner B."/>
            <person name="Hellner-Burris K."/>
            <person name="Hernandez J.A."/>
            <person name="Houmiel K."/>
            <person name="Imperial J."/>
            <person name="Kennedy C."/>
            <person name="Larson T.J."/>
            <person name="Latreille P."/>
            <person name="Ligon L.S."/>
            <person name="Lu J."/>
            <person name="Maerk M."/>
            <person name="Miller N.M."/>
            <person name="Norton S."/>
            <person name="O'Carroll I.P."/>
            <person name="Paulsen I."/>
            <person name="Raulfs E.C."/>
            <person name="Roemer R."/>
            <person name="Rosser J."/>
            <person name="Segura D."/>
            <person name="Slater S."/>
            <person name="Stricklin S.L."/>
            <person name="Studholme D.J."/>
            <person name="Sun J."/>
            <person name="Viana C.J."/>
            <person name="Wallin E."/>
            <person name="Wang B."/>
            <person name="Wheeler C."/>
            <person name="Zhu H."/>
            <person name="Dean D.R."/>
            <person name="Dixon R."/>
            <person name="Wood D."/>
        </authorList>
    </citation>
    <scope>NUCLEOTIDE SEQUENCE [LARGE SCALE GENOMIC DNA]</scope>
    <source>
        <strain>DJ / ATCC BAA-1303</strain>
    </source>
</reference>
<proteinExistence type="inferred from homology"/>
<gene>
    <name evidence="1" type="primary">ihfB</name>
    <name evidence="1" type="synonym">himD</name>
    <name type="ordered locus">Avin_15880</name>
</gene>
<organism>
    <name type="scientific">Azotobacter vinelandii (strain DJ / ATCC BAA-1303)</name>
    <dbReference type="NCBI Taxonomy" id="322710"/>
    <lineage>
        <taxon>Bacteria</taxon>
        <taxon>Pseudomonadati</taxon>
        <taxon>Pseudomonadota</taxon>
        <taxon>Gammaproteobacteria</taxon>
        <taxon>Pseudomonadales</taxon>
        <taxon>Pseudomonadaceae</taxon>
        <taxon>Azotobacter</taxon>
    </lineage>
</organism>
<dbReference type="EMBL" id="CP001157">
    <property type="protein sequence ID" value="ACO77803.1"/>
    <property type="molecule type" value="Genomic_DNA"/>
</dbReference>
<dbReference type="RefSeq" id="WP_012700218.1">
    <property type="nucleotide sequence ID" value="NC_012560.1"/>
</dbReference>
<dbReference type="SMR" id="C1DRR5"/>
<dbReference type="STRING" id="322710.Avin_15880"/>
<dbReference type="EnsemblBacteria" id="ACO77803">
    <property type="protein sequence ID" value="ACO77803"/>
    <property type="gene ID" value="Avin_15880"/>
</dbReference>
<dbReference type="GeneID" id="88184879"/>
<dbReference type="KEGG" id="avn:Avin_15880"/>
<dbReference type="eggNOG" id="COG0776">
    <property type="taxonomic scope" value="Bacteria"/>
</dbReference>
<dbReference type="HOGENOM" id="CLU_105066_2_0_6"/>
<dbReference type="OrthoDB" id="9804203at2"/>
<dbReference type="Proteomes" id="UP000002424">
    <property type="component" value="Chromosome"/>
</dbReference>
<dbReference type="GO" id="GO:0005694">
    <property type="term" value="C:chromosome"/>
    <property type="evidence" value="ECO:0007669"/>
    <property type="project" value="InterPro"/>
</dbReference>
<dbReference type="GO" id="GO:0005829">
    <property type="term" value="C:cytosol"/>
    <property type="evidence" value="ECO:0007669"/>
    <property type="project" value="TreeGrafter"/>
</dbReference>
<dbReference type="GO" id="GO:0003677">
    <property type="term" value="F:DNA binding"/>
    <property type="evidence" value="ECO:0007669"/>
    <property type="project" value="UniProtKB-UniRule"/>
</dbReference>
<dbReference type="GO" id="GO:0030527">
    <property type="term" value="F:structural constituent of chromatin"/>
    <property type="evidence" value="ECO:0007669"/>
    <property type="project" value="InterPro"/>
</dbReference>
<dbReference type="GO" id="GO:0006310">
    <property type="term" value="P:DNA recombination"/>
    <property type="evidence" value="ECO:0007669"/>
    <property type="project" value="UniProtKB-UniRule"/>
</dbReference>
<dbReference type="GO" id="GO:0006355">
    <property type="term" value="P:regulation of DNA-templated transcription"/>
    <property type="evidence" value="ECO:0007669"/>
    <property type="project" value="UniProtKB-UniRule"/>
</dbReference>
<dbReference type="GO" id="GO:0006417">
    <property type="term" value="P:regulation of translation"/>
    <property type="evidence" value="ECO:0007669"/>
    <property type="project" value="UniProtKB-UniRule"/>
</dbReference>
<dbReference type="CDD" id="cd13836">
    <property type="entry name" value="IHF_B"/>
    <property type="match status" value="1"/>
</dbReference>
<dbReference type="FunFam" id="4.10.520.10:FF:000003">
    <property type="entry name" value="Integration host factor subunit beta"/>
    <property type="match status" value="1"/>
</dbReference>
<dbReference type="Gene3D" id="4.10.520.10">
    <property type="entry name" value="IHF-like DNA-binding proteins"/>
    <property type="match status" value="1"/>
</dbReference>
<dbReference type="HAMAP" id="MF_00381">
    <property type="entry name" value="IHF_beta"/>
    <property type="match status" value="1"/>
</dbReference>
<dbReference type="InterPro" id="IPR000119">
    <property type="entry name" value="Hist_DNA-bd"/>
</dbReference>
<dbReference type="InterPro" id="IPR020816">
    <property type="entry name" value="Histone-like_DNA-bd_CS"/>
</dbReference>
<dbReference type="InterPro" id="IPR010992">
    <property type="entry name" value="IHF-like_DNA-bd_dom_sf"/>
</dbReference>
<dbReference type="InterPro" id="IPR005685">
    <property type="entry name" value="IHF_beta"/>
</dbReference>
<dbReference type="NCBIfam" id="TIGR00988">
    <property type="entry name" value="hip"/>
    <property type="match status" value="1"/>
</dbReference>
<dbReference type="NCBIfam" id="NF001222">
    <property type="entry name" value="PRK00199.1"/>
    <property type="match status" value="1"/>
</dbReference>
<dbReference type="PANTHER" id="PTHR33175">
    <property type="entry name" value="DNA-BINDING PROTEIN HU"/>
    <property type="match status" value="1"/>
</dbReference>
<dbReference type="PANTHER" id="PTHR33175:SF5">
    <property type="entry name" value="INTEGRATION HOST FACTOR SUBUNIT BETA"/>
    <property type="match status" value="1"/>
</dbReference>
<dbReference type="Pfam" id="PF00216">
    <property type="entry name" value="Bac_DNA_binding"/>
    <property type="match status" value="1"/>
</dbReference>
<dbReference type="PRINTS" id="PR01727">
    <property type="entry name" value="DNABINDINGHU"/>
</dbReference>
<dbReference type="SMART" id="SM00411">
    <property type="entry name" value="BHL"/>
    <property type="match status" value="1"/>
</dbReference>
<dbReference type="SUPFAM" id="SSF47729">
    <property type="entry name" value="IHF-like DNA-binding proteins"/>
    <property type="match status" value="1"/>
</dbReference>
<dbReference type="PROSITE" id="PS00045">
    <property type="entry name" value="HISTONE_LIKE"/>
    <property type="match status" value="1"/>
</dbReference>
<keyword id="KW-0233">DNA recombination</keyword>
<keyword id="KW-0238">DNA-binding</keyword>
<keyword id="KW-0804">Transcription</keyword>
<keyword id="KW-0805">Transcription regulation</keyword>
<keyword id="KW-0810">Translation regulation</keyword>
<comment type="function">
    <text evidence="1">This protein is one of the two subunits of integration host factor, a specific DNA-binding protein that functions in genetic recombination as well as in transcriptional and translational control.</text>
</comment>
<comment type="subunit">
    <text evidence="1">Heterodimer of an alpha and a beta chain.</text>
</comment>
<comment type="similarity">
    <text evidence="1">Belongs to the bacterial histone-like protein family.</text>
</comment>
<protein>
    <recommendedName>
        <fullName evidence="1">Integration host factor subunit beta</fullName>
        <shortName evidence="1">IHF-beta</shortName>
    </recommendedName>
</protein>
<name>IHFB_AZOVD</name>
<feature type="chain" id="PRO_1000205694" description="Integration host factor subunit beta">
    <location>
        <begin position="1"/>
        <end position="92"/>
    </location>
</feature>